<comment type="function">
    <text>This protein is probably required for relaxation complex formation and plasmid mobilization by conjugative plasmids.</text>
</comment>
<gene>
    <name type="primary">rlx</name>
</gene>
<reference key="1">
    <citation type="journal article" date="1988" name="Nucleic Acids Res.">
        <title>Nucleotide sequence of pS194, a streptomycin-resistance plasmid from Staphylococcus aureus.</title>
        <authorList>
            <person name="Projan S.J."/>
            <person name="Moghazeh S."/>
            <person name="Novick R.P."/>
        </authorList>
    </citation>
    <scope>NUCLEOTIDE SEQUENCE [GENOMIC DNA]</scope>
</reference>
<proteinExistence type="predicted"/>
<name>RLX1_STAAU</name>
<accession>P12054</accession>
<keyword id="KW-0614">Plasmid</keyword>
<sequence length="320" mass="36997">MATTKLGNTKSASRAINYAEERAEEKSGLNCDVDYAKSYFKQTRALYGKENGVQAHTVIQSFKPGEVTAKECNEIGLELAKKIAPDYQVAVYTHTDKDHYHNHIIINSVNLETGNKYQSNKEQRDFIKKANDQLCEERGLSVPEKSSEIRYTLAEQNMIDKDKRSWKNDIRMAVEETKDNAVAFEEFNTLLKEKGVEITRVTKNNVTYRHIEEDKKVRGNKLGDSYDKGVIENGFAIEKFRREREEEREYDEYADTFEVDWDAFAENSEDLRKRRIARTEETKQASNKIYIRDERTTGLERKGIAGNQVEFEKDDGGLSR</sequence>
<organism>
    <name type="scientific">Staphylococcus aureus</name>
    <dbReference type="NCBI Taxonomy" id="1280"/>
    <lineage>
        <taxon>Bacteria</taxon>
        <taxon>Bacillati</taxon>
        <taxon>Bacillota</taxon>
        <taxon>Bacilli</taxon>
        <taxon>Bacillales</taxon>
        <taxon>Staphylococcaceae</taxon>
        <taxon>Staphylococcus</taxon>
    </lineage>
</organism>
<protein>
    <recommendedName>
        <fullName>Protein rlx</fullName>
    </recommendedName>
</protein>
<feature type="chain" id="PRO_0000068435" description="Protein rlx">
    <location>
        <begin position="1"/>
        <end position="320"/>
    </location>
</feature>
<geneLocation type="plasmid">
    <name>pS194</name>
</geneLocation>
<dbReference type="EMBL" id="X06627">
    <property type="protein sequence ID" value="CAA29840.1"/>
    <property type="molecule type" value="Genomic_DNA"/>
</dbReference>
<dbReference type="PIR" id="S00935">
    <property type="entry name" value="S00935"/>
</dbReference>
<dbReference type="RefSeq" id="NP_976272.1">
    <property type="nucleotide sequence ID" value="NC_005564.1"/>
</dbReference>
<dbReference type="RefSeq" id="WP_011167204.1">
    <property type="nucleotide sequence ID" value="NC_005564.1"/>
</dbReference>
<dbReference type="InterPro" id="IPR005094">
    <property type="entry name" value="Endonuclease_MobA/VirD2"/>
</dbReference>
<dbReference type="Pfam" id="PF03432">
    <property type="entry name" value="Relaxase"/>
    <property type="match status" value="1"/>
</dbReference>